<dbReference type="EC" id="2.4.2.57" evidence="1"/>
<dbReference type="EMBL" id="AE010299">
    <property type="protein sequence ID" value="AAM06613.1"/>
    <property type="molecule type" value="Genomic_DNA"/>
</dbReference>
<dbReference type="RefSeq" id="WP_011023176.1">
    <property type="nucleotide sequence ID" value="NC_003552.1"/>
</dbReference>
<dbReference type="SMR" id="Q8TL01"/>
<dbReference type="FunCoup" id="Q8TL01">
    <property type="interactions" value="27"/>
</dbReference>
<dbReference type="STRING" id="188937.MA_3242"/>
<dbReference type="EnsemblBacteria" id="AAM06613">
    <property type="protein sequence ID" value="AAM06613"/>
    <property type="gene ID" value="MA_3242"/>
</dbReference>
<dbReference type="GeneID" id="1475135"/>
<dbReference type="KEGG" id="mac:MA_3242"/>
<dbReference type="HOGENOM" id="CLU_025040_6_0_2"/>
<dbReference type="InParanoid" id="Q8TL01"/>
<dbReference type="OrthoDB" id="9827at2157"/>
<dbReference type="PhylomeDB" id="Q8TL01"/>
<dbReference type="Proteomes" id="UP000002487">
    <property type="component" value="Chromosome"/>
</dbReference>
<dbReference type="GO" id="GO:0005829">
    <property type="term" value="C:cytosol"/>
    <property type="evidence" value="ECO:0000318"/>
    <property type="project" value="GO_Central"/>
</dbReference>
<dbReference type="GO" id="GO:0004645">
    <property type="term" value="F:1,4-alpha-oligoglucan phosphorylase activity"/>
    <property type="evidence" value="ECO:0007669"/>
    <property type="project" value="InterPro"/>
</dbReference>
<dbReference type="GO" id="GO:0016208">
    <property type="term" value="F:AMP binding"/>
    <property type="evidence" value="ECO:0007669"/>
    <property type="project" value="UniProtKB-UniRule"/>
</dbReference>
<dbReference type="GO" id="GO:0016763">
    <property type="term" value="F:pentosyltransferase activity"/>
    <property type="evidence" value="ECO:0007669"/>
    <property type="project" value="UniProtKB-UniRule"/>
</dbReference>
<dbReference type="GO" id="GO:0006196">
    <property type="term" value="P:AMP catabolic process"/>
    <property type="evidence" value="ECO:0000318"/>
    <property type="project" value="GO_Central"/>
</dbReference>
<dbReference type="GO" id="GO:0046125">
    <property type="term" value="P:pyrimidine deoxyribonucleoside metabolic process"/>
    <property type="evidence" value="ECO:0007669"/>
    <property type="project" value="InterPro"/>
</dbReference>
<dbReference type="GO" id="GO:0006206">
    <property type="term" value="P:pyrimidine nucleobase metabolic process"/>
    <property type="evidence" value="ECO:0007669"/>
    <property type="project" value="InterPro"/>
</dbReference>
<dbReference type="CDD" id="cd02775">
    <property type="entry name" value="MopB_CT"/>
    <property type="match status" value="1"/>
</dbReference>
<dbReference type="FunFam" id="3.90.1170.30:FF:000004">
    <property type="entry name" value="AMP phosphorylase"/>
    <property type="match status" value="1"/>
</dbReference>
<dbReference type="Gene3D" id="1.20.970.50">
    <property type="match status" value="1"/>
</dbReference>
<dbReference type="Gene3D" id="2.40.40.20">
    <property type="match status" value="1"/>
</dbReference>
<dbReference type="Gene3D" id="3.40.1030.10">
    <property type="entry name" value="Nucleoside phosphorylase/phosphoribosyltransferase catalytic domain"/>
    <property type="match status" value="1"/>
</dbReference>
<dbReference type="Gene3D" id="3.90.1170.30">
    <property type="entry name" value="Pyrimidine nucleoside phosphorylase-like, C-terminal domain"/>
    <property type="match status" value="1"/>
</dbReference>
<dbReference type="HAMAP" id="MF_02132">
    <property type="entry name" value="AMP_phosphorylase"/>
    <property type="match status" value="1"/>
</dbReference>
<dbReference type="InterPro" id="IPR017713">
    <property type="entry name" value="AMP_phosphorylase"/>
</dbReference>
<dbReference type="InterPro" id="IPR000312">
    <property type="entry name" value="Glycosyl_Trfase_fam3"/>
</dbReference>
<dbReference type="InterPro" id="IPR017459">
    <property type="entry name" value="Glycosyl_Trfase_fam3_N_dom"/>
</dbReference>
<dbReference type="InterPro" id="IPR036320">
    <property type="entry name" value="Glycosyl_Trfase_fam3_N_dom_sf"/>
</dbReference>
<dbReference type="InterPro" id="IPR035902">
    <property type="entry name" value="Nuc_phospho_transferase"/>
</dbReference>
<dbReference type="InterPro" id="IPR036566">
    <property type="entry name" value="PYNP-like_C_sf"/>
</dbReference>
<dbReference type="InterPro" id="IPR013102">
    <property type="entry name" value="PYNP_C"/>
</dbReference>
<dbReference type="InterPro" id="IPR017872">
    <property type="entry name" value="Pyrmidine_PPase_CS"/>
</dbReference>
<dbReference type="InterPro" id="IPR013466">
    <property type="entry name" value="Thymidine/AMP_Pase"/>
</dbReference>
<dbReference type="InterPro" id="IPR000053">
    <property type="entry name" value="Thymidine/pyrmidine_PPase"/>
</dbReference>
<dbReference type="NCBIfam" id="TIGR03327">
    <property type="entry name" value="AMP_phos"/>
    <property type="match status" value="1"/>
</dbReference>
<dbReference type="NCBIfam" id="TIGR02645">
    <property type="entry name" value="ARCH_P_rylase"/>
    <property type="match status" value="1"/>
</dbReference>
<dbReference type="NCBIfam" id="NF003338">
    <property type="entry name" value="PRK04350.1"/>
    <property type="match status" value="1"/>
</dbReference>
<dbReference type="PANTHER" id="PTHR10515">
    <property type="entry name" value="THYMIDINE PHOSPHORYLASE"/>
    <property type="match status" value="1"/>
</dbReference>
<dbReference type="PANTHER" id="PTHR10515:SF0">
    <property type="entry name" value="THYMIDINE PHOSPHORYLASE"/>
    <property type="match status" value="1"/>
</dbReference>
<dbReference type="Pfam" id="PF02885">
    <property type="entry name" value="Glycos_trans_3N"/>
    <property type="match status" value="1"/>
</dbReference>
<dbReference type="Pfam" id="PF00591">
    <property type="entry name" value="Glycos_transf_3"/>
    <property type="match status" value="1"/>
</dbReference>
<dbReference type="Pfam" id="PF07831">
    <property type="entry name" value="PYNP_C"/>
    <property type="match status" value="1"/>
</dbReference>
<dbReference type="SMART" id="SM00941">
    <property type="entry name" value="PYNP_C"/>
    <property type="match status" value="1"/>
</dbReference>
<dbReference type="SUPFAM" id="SSF52418">
    <property type="entry name" value="Nucleoside phosphorylase/phosphoribosyltransferase catalytic domain"/>
    <property type="match status" value="1"/>
</dbReference>
<dbReference type="SUPFAM" id="SSF47648">
    <property type="entry name" value="Nucleoside phosphorylase/phosphoribosyltransferase N-terminal domain"/>
    <property type="match status" value="1"/>
</dbReference>
<dbReference type="SUPFAM" id="SSF54680">
    <property type="entry name" value="Pyrimidine nucleoside phosphorylase C-terminal domain"/>
    <property type="match status" value="1"/>
</dbReference>
<dbReference type="PROSITE" id="PS00647">
    <property type="entry name" value="THYMID_PHOSPHORYLASE"/>
    <property type="match status" value="1"/>
</dbReference>
<reference key="1">
    <citation type="journal article" date="2002" name="Genome Res.">
        <title>The genome of Methanosarcina acetivorans reveals extensive metabolic and physiological diversity.</title>
        <authorList>
            <person name="Galagan J.E."/>
            <person name="Nusbaum C."/>
            <person name="Roy A."/>
            <person name="Endrizzi M.G."/>
            <person name="Macdonald P."/>
            <person name="FitzHugh W."/>
            <person name="Calvo S."/>
            <person name="Engels R."/>
            <person name="Smirnov S."/>
            <person name="Atnoor D."/>
            <person name="Brown A."/>
            <person name="Allen N."/>
            <person name="Naylor J."/>
            <person name="Stange-Thomann N."/>
            <person name="DeArellano K."/>
            <person name="Johnson R."/>
            <person name="Linton L."/>
            <person name="McEwan P."/>
            <person name="McKernan K."/>
            <person name="Talamas J."/>
            <person name="Tirrell A."/>
            <person name="Ye W."/>
            <person name="Zimmer A."/>
            <person name="Barber R.D."/>
            <person name="Cann I."/>
            <person name="Graham D.E."/>
            <person name="Grahame D.A."/>
            <person name="Guss A.M."/>
            <person name="Hedderich R."/>
            <person name="Ingram-Smith C."/>
            <person name="Kuettner H.C."/>
            <person name="Krzycki J.A."/>
            <person name="Leigh J.A."/>
            <person name="Li W."/>
            <person name="Liu J."/>
            <person name="Mukhopadhyay B."/>
            <person name="Reeve J.N."/>
            <person name="Smith K."/>
            <person name="Springer T.A."/>
            <person name="Umayam L.A."/>
            <person name="White O."/>
            <person name="White R.H."/>
            <person name="de Macario E.C."/>
            <person name="Ferry J.G."/>
            <person name="Jarrell K.F."/>
            <person name="Jing H."/>
            <person name="Macario A.J.L."/>
            <person name="Paulsen I.T."/>
            <person name="Pritchett M."/>
            <person name="Sowers K.R."/>
            <person name="Swanson R.V."/>
            <person name="Zinder S.H."/>
            <person name="Lander E."/>
            <person name="Metcalf W.W."/>
            <person name="Birren B."/>
        </authorList>
    </citation>
    <scope>NUCLEOTIDE SEQUENCE [LARGE SCALE GENOMIC DNA]</scope>
    <source>
        <strain>ATCC 35395 / DSM 2834 / JCM 12185 / C2A</strain>
    </source>
</reference>
<feature type="chain" id="PRO_0000059087" description="AMP phosphorylase">
    <location>
        <begin position="1"/>
        <end position="506"/>
    </location>
</feature>
<feature type="active site" description="Proton donor" evidence="1">
    <location>
        <position position="255"/>
    </location>
</feature>
<feature type="binding site" evidence="1">
    <location>
        <position position="167"/>
    </location>
    <ligand>
        <name>AMP</name>
        <dbReference type="ChEBI" id="CHEBI:456215"/>
    </ligand>
</feature>
<feature type="binding site" evidence="1">
    <location>
        <begin position="193"/>
        <end position="198"/>
    </location>
    <ligand>
        <name>AMP</name>
        <dbReference type="ChEBI" id="CHEBI:456215"/>
    </ligand>
</feature>
<feature type="binding site" evidence="1">
    <location>
        <position position="202"/>
    </location>
    <ligand>
        <name>AMP</name>
        <dbReference type="ChEBI" id="CHEBI:456215"/>
    </ligand>
</feature>
<feature type="binding site" evidence="1">
    <location>
        <position position="263"/>
    </location>
    <ligand>
        <name>AMP</name>
        <dbReference type="ChEBI" id="CHEBI:456215"/>
    </ligand>
</feature>
<feature type="binding site" evidence="1">
    <location>
        <position position="287"/>
    </location>
    <ligand>
        <name>AMP</name>
        <dbReference type="ChEBI" id="CHEBI:456215"/>
    </ligand>
</feature>
<comment type="function">
    <text evidence="1">Catalyzes the conversion of AMP and phosphate to adenine and ribose 1,5-bisphosphate (R15P). Exhibits phosphorylase activity toward CMP and UMP in addition to AMP. Functions in an archaeal AMP degradation pathway, together with R15P isomerase and RubisCO.</text>
</comment>
<comment type="catalytic activity">
    <reaction evidence="1">
        <text>AMP + phosphate = alpha-D-ribose 1,5-bisphosphate + adenine</text>
        <dbReference type="Rhea" id="RHEA:36975"/>
        <dbReference type="ChEBI" id="CHEBI:16708"/>
        <dbReference type="ChEBI" id="CHEBI:43474"/>
        <dbReference type="ChEBI" id="CHEBI:68688"/>
        <dbReference type="ChEBI" id="CHEBI:456215"/>
        <dbReference type="EC" id="2.4.2.57"/>
    </reaction>
</comment>
<comment type="catalytic activity">
    <reaction evidence="1">
        <text>CMP + phosphate = cytosine + alpha-D-ribose 1,5-bisphosphate</text>
        <dbReference type="Rhea" id="RHEA:36987"/>
        <dbReference type="ChEBI" id="CHEBI:16040"/>
        <dbReference type="ChEBI" id="CHEBI:43474"/>
        <dbReference type="ChEBI" id="CHEBI:60377"/>
        <dbReference type="ChEBI" id="CHEBI:68688"/>
        <dbReference type="EC" id="2.4.2.57"/>
    </reaction>
</comment>
<comment type="catalytic activity">
    <reaction evidence="1">
        <text>UMP + phosphate = alpha-D-ribose 1,5-bisphosphate + uracil</text>
        <dbReference type="Rhea" id="RHEA:36991"/>
        <dbReference type="ChEBI" id="CHEBI:17568"/>
        <dbReference type="ChEBI" id="CHEBI:43474"/>
        <dbReference type="ChEBI" id="CHEBI:57865"/>
        <dbReference type="ChEBI" id="CHEBI:68688"/>
        <dbReference type="EC" id="2.4.2.57"/>
    </reaction>
</comment>
<comment type="similarity">
    <text evidence="1">Belongs to the thymidine/pyrimidine-nucleoside phosphorylase family. Type 2 subfamily.</text>
</comment>
<gene>
    <name type="ordered locus">MA_3242</name>
</gene>
<keyword id="KW-0328">Glycosyltransferase</keyword>
<keyword id="KW-1185">Reference proteome</keyword>
<keyword id="KW-0808">Transferase</keyword>
<proteinExistence type="inferred from homology"/>
<name>AMPPA_METAC</name>
<organism>
    <name type="scientific">Methanosarcina acetivorans (strain ATCC 35395 / DSM 2834 / JCM 12185 / C2A)</name>
    <dbReference type="NCBI Taxonomy" id="188937"/>
    <lineage>
        <taxon>Archaea</taxon>
        <taxon>Methanobacteriati</taxon>
        <taxon>Methanobacteriota</taxon>
        <taxon>Stenosarchaea group</taxon>
        <taxon>Methanomicrobia</taxon>
        <taxon>Methanosarcinales</taxon>
        <taxon>Methanosarcinaceae</taxon>
        <taxon>Methanosarcina</taxon>
    </lineage>
</organism>
<accession>Q8TL01</accession>
<protein>
    <recommendedName>
        <fullName evidence="1">AMP phosphorylase</fullName>
        <shortName evidence="1">AMPpase</shortName>
        <ecNumber evidence="1">2.4.2.57</ecNumber>
    </recommendedName>
    <alternativeName>
        <fullName evidence="1">Nucleoside monophosphate phosphorylase</fullName>
        <shortName evidence="1">NMP phosphorylase</shortName>
    </alternativeName>
</protein>
<evidence type="ECO:0000255" key="1">
    <source>
        <dbReference type="HAMAP-Rule" id="MF_02132"/>
    </source>
</evidence>
<sequence>MRLNLEHFDIKIGQHKVMFNVADAKELGVNPGDRVRIRGHQSISAIVDTTEDMVPPGTLGVFSEVYEHFEDWDKPVEVVPALRSKSSGVIKKMLDKKSVLQDEIKLLVNDIVEENLSDVELSAFITASYIHGMTDDEVEWLTRAMIDTGDTIEFDTHPVMDKHSIGGVPGNKISLLVVPIVAANGLLIPKTSSRAITGAGGTADLMEVLSPVEFSSEEVKEIAEKVGGALVWGGATNIAPADDKLIRVEYPLSIDPYYQMLASIMAKKGAIGAENVVMDIPIGPSTKVPTVQEGQKLARDLINLGHRLGMNVECAITYGSSPIGRRVGPCLEVREAMKVLESMEGPNSLIEKSAALAGILLEMGGAAPRDRGKELALETLRNGKALEKMKQIIEAQGGDPNIKSDDIQVGQYTADIYASTDGYVIEFDNKWIIEIARLAGAPNDKGAGVAIHKKMGEQVKKGDAILTIYAEKEFKLDLALTTAQRTNPIIVEGMLLKRIPGIYGFQ</sequence>